<proteinExistence type="inferred from homology"/>
<comment type="function">
    <text evidence="1">Assembles around the rod to form the L-ring and probably protects the motor/basal body from shearing forces during rotation.</text>
</comment>
<comment type="subunit">
    <text evidence="1">The basal body constitutes a major portion of the flagellar organelle and consists of four rings (L,P,S, and M) mounted on a central rod.</text>
</comment>
<comment type="subcellular location">
    <subcellularLocation>
        <location evidence="1">Periplasm</location>
    </subcellularLocation>
    <subcellularLocation>
        <location evidence="1">Bacterial flagellum basal body</location>
    </subcellularLocation>
</comment>
<comment type="similarity">
    <text evidence="1">Belongs to the FlgI family.</text>
</comment>
<protein>
    <recommendedName>
        <fullName evidence="1">Flagellar P-ring protein</fullName>
    </recommendedName>
    <alternativeName>
        <fullName evidence="1">Basal body P-ring protein</fullName>
    </alternativeName>
</protein>
<sequence length="392" mass="40897">MKPFARRALLTAEPIRALLLAASLLAATLGLMPAEAFGASRIKDIADFEGVRDNMLVGYGLVVGLNSTGDSLTNAPFTKESLTGMLERLGVNIRDKTGAISSQLTPKNVAAVMITATLPPFSRQGTRIDINVSAMGDAKDLRGGTLLVTPLIGADGEVYAVGQGQVATGGFTASGASGSSVTKGVPTAGRIANGAIVERELPFEMSHLESVKVSLRNPDFTTSRRIAQAINSFLGGDMARPVDPGTVQIAVPPGYRGNVVGLLTDVEQLRVEPDQMARVVVDEVSGTIVMGENVRISTVAIAQGQLTIRITETPQVSQPSPFSDAGTTTTVQRTDIQVDEGAGNKLAVVPHKVTLQELVEGLNSLGIGPRDLITILQAIKAAGALQAELEVL</sequence>
<evidence type="ECO:0000255" key="1">
    <source>
        <dbReference type="HAMAP-Rule" id="MF_00416"/>
    </source>
</evidence>
<name>FLGI_PARM1</name>
<feature type="signal peptide" evidence="1">
    <location>
        <begin position="1"/>
        <end position="38"/>
    </location>
</feature>
<feature type="chain" id="PRO_0000236304" description="Flagellar P-ring protein">
    <location>
        <begin position="39"/>
        <end position="392"/>
    </location>
</feature>
<accession>Q2W0J7</accession>
<organism>
    <name type="scientific">Paramagnetospirillum magneticum (strain ATCC 700264 / AMB-1)</name>
    <name type="common">Magnetospirillum magneticum</name>
    <dbReference type="NCBI Taxonomy" id="342108"/>
    <lineage>
        <taxon>Bacteria</taxon>
        <taxon>Pseudomonadati</taxon>
        <taxon>Pseudomonadota</taxon>
        <taxon>Alphaproteobacteria</taxon>
        <taxon>Rhodospirillales</taxon>
        <taxon>Magnetospirillaceae</taxon>
        <taxon>Paramagnetospirillum</taxon>
    </lineage>
</organism>
<gene>
    <name evidence="1" type="primary">flgI</name>
    <name type="ordered locus">amb3824</name>
</gene>
<reference key="1">
    <citation type="journal article" date="2005" name="DNA Res.">
        <title>Complete genome sequence of the facultative anaerobic magnetotactic bacterium Magnetospirillum sp. strain AMB-1.</title>
        <authorList>
            <person name="Matsunaga T."/>
            <person name="Okamura Y."/>
            <person name="Fukuda Y."/>
            <person name="Wahyudi A.T."/>
            <person name="Murase Y."/>
            <person name="Takeyama H."/>
        </authorList>
    </citation>
    <scope>NUCLEOTIDE SEQUENCE [LARGE SCALE GENOMIC DNA]</scope>
    <source>
        <strain>ATCC 700264 / AMB-1</strain>
    </source>
</reference>
<dbReference type="EMBL" id="AP007255">
    <property type="protein sequence ID" value="BAE52628.1"/>
    <property type="molecule type" value="Genomic_DNA"/>
</dbReference>
<dbReference type="RefSeq" id="WP_011386178.1">
    <property type="nucleotide sequence ID" value="NC_007626.1"/>
</dbReference>
<dbReference type="SMR" id="Q2W0J7"/>
<dbReference type="STRING" id="342108.amb3824"/>
<dbReference type="KEGG" id="mag:amb3824"/>
<dbReference type="HOGENOM" id="CLU_045235_1_0_5"/>
<dbReference type="OrthoDB" id="9786431at2"/>
<dbReference type="Proteomes" id="UP000007058">
    <property type="component" value="Chromosome"/>
</dbReference>
<dbReference type="GO" id="GO:0009428">
    <property type="term" value="C:bacterial-type flagellum basal body, distal rod, P ring"/>
    <property type="evidence" value="ECO:0007669"/>
    <property type="project" value="InterPro"/>
</dbReference>
<dbReference type="GO" id="GO:0030288">
    <property type="term" value="C:outer membrane-bounded periplasmic space"/>
    <property type="evidence" value="ECO:0007669"/>
    <property type="project" value="InterPro"/>
</dbReference>
<dbReference type="GO" id="GO:0005198">
    <property type="term" value="F:structural molecule activity"/>
    <property type="evidence" value="ECO:0007669"/>
    <property type="project" value="InterPro"/>
</dbReference>
<dbReference type="GO" id="GO:0071973">
    <property type="term" value="P:bacterial-type flagellum-dependent cell motility"/>
    <property type="evidence" value="ECO:0007669"/>
    <property type="project" value="InterPro"/>
</dbReference>
<dbReference type="HAMAP" id="MF_00416">
    <property type="entry name" value="FlgI"/>
    <property type="match status" value="1"/>
</dbReference>
<dbReference type="InterPro" id="IPR001782">
    <property type="entry name" value="Flag_FlgI"/>
</dbReference>
<dbReference type="NCBIfam" id="NF003676">
    <property type="entry name" value="PRK05303.1"/>
    <property type="match status" value="1"/>
</dbReference>
<dbReference type="PANTHER" id="PTHR30381">
    <property type="entry name" value="FLAGELLAR P-RING PERIPLASMIC PROTEIN FLGI"/>
    <property type="match status" value="1"/>
</dbReference>
<dbReference type="PANTHER" id="PTHR30381:SF0">
    <property type="entry name" value="FLAGELLAR P-RING PROTEIN"/>
    <property type="match status" value="1"/>
</dbReference>
<dbReference type="Pfam" id="PF02119">
    <property type="entry name" value="FlgI"/>
    <property type="match status" value="1"/>
</dbReference>
<dbReference type="PRINTS" id="PR01010">
    <property type="entry name" value="FLGPRINGFLGI"/>
</dbReference>
<keyword id="KW-0975">Bacterial flagellum</keyword>
<keyword id="KW-0574">Periplasm</keyword>
<keyword id="KW-0732">Signal</keyword>